<name>OSPD3_SHIFL</name>
<sequence>MPSVNLIPSRKICLQNMINKDNVSVETIQSLLHSKQLPYFSDKRSFLLNLNCQVTDHSGRLIVCRHLASYWIAQFNKSSGHVDYHHFAFPDEIKNYVSVSEEEKAINVPAIIYFVENGSWGDIIFYIFNEMIFHSEKSRALEISTSNHNMALGLKIKETKNGGDFVIQLYDPNHTATHLRAEFNKFNLAKIKKLTVDNFLDEKHQKCYGLISDGMSIFVDRHTPTSMSSIIRWPDNLLHPKVIYHAMRMGLTELIQKVTRVVQLSDLSDNTLELLLAAKNDDGLSGLLLALQNGHSDTILAYGELLETSGLNLDKTVELLTAEGMGGRISGLSQALQNGHAETIKTYGRLLKKRAINIEYNKLKNLLTAYYYDEVHRQIPGLMFALQNGHADAIRAYGELILSPPLLNSEDIVNLLASRRYDNVPGLLLALNNGQADAILAYGDILNEAKLNLDKKAELLEAKDSNGLSGLFVALHNGCVETIIAYGKILHTADLTPHQASKLLAAEGPNGVSGLIIAFQNRNFEAIKTYMGIIKNENITPEEIAEHLDKKNGSDFLEIMKNIKS</sequence>
<evidence type="ECO:0000269" key="1">
    <source>
    </source>
</evidence>
<evidence type="ECO:0000303" key="2">
    <source>
    </source>
</evidence>
<evidence type="ECO:0000305" key="3"/>
<evidence type="ECO:0000305" key="4">
    <source>
    </source>
</evidence>
<evidence type="ECO:0000312" key="5">
    <source>
        <dbReference type="EMBL" id="AAL72316.1"/>
    </source>
</evidence>
<keyword id="KW-0378">Hydrolase</keyword>
<keyword id="KW-0614">Plasmid</keyword>
<keyword id="KW-0645">Protease</keyword>
<keyword id="KW-1185">Reference proteome</keyword>
<keyword id="KW-0964">Secreted</keyword>
<keyword id="KW-0800">Toxin</keyword>
<keyword id="KW-0843">Virulence</keyword>
<proteinExistence type="evidence at protein level"/>
<gene>
    <name evidence="2" type="primary">ospD3</name>
    <name evidence="5" type="ordered locus">CP0093</name>
    <name evidence="5" type="ORF">SF_p0093</name>
</gene>
<organism>
    <name type="scientific">Shigella flexneri</name>
    <dbReference type="NCBI Taxonomy" id="623"/>
    <lineage>
        <taxon>Bacteria</taxon>
        <taxon>Pseudomonadati</taxon>
        <taxon>Pseudomonadota</taxon>
        <taxon>Gammaproteobacteria</taxon>
        <taxon>Enterobacterales</taxon>
        <taxon>Enterobacteriaceae</taxon>
        <taxon>Shigella</taxon>
    </lineage>
</organism>
<protein>
    <recommendedName>
        <fullName evidence="3">Effector protease OspD3</fullName>
        <ecNumber evidence="1">3.4.-.-</ecNumber>
    </recommendedName>
</protein>
<geneLocation type="plasmid">
    <name>pCP301</name>
</geneLocation>
<reference key="1">
    <citation type="journal article" date="2002" name="Nucleic Acids Res.">
        <title>Genome sequence of Shigella flexneri 2a: insights into pathogenicity through comparison with genomes of Escherichia coli K12 and O157.</title>
        <authorList>
            <person name="Jin Q."/>
            <person name="Yuan Z."/>
            <person name="Xu J."/>
            <person name="Wang Y."/>
            <person name="Shen Y."/>
            <person name="Lu W."/>
            <person name="Wang J."/>
            <person name="Liu H."/>
            <person name="Yang J."/>
            <person name="Yang F."/>
            <person name="Zhang X."/>
            <person name="Zhang J."/>
            <person name="Yang G."/>
            <person name="Wu H."/>
            <person name="Qu D."/>
            <person name="Dong J."/>
            <person name="Sun L."/>
            <person name="Xue Y."/>
            <person name="Zhao A."/>
            <person name="Gao Y."/>
            <person name="Zhu J."/>
            <person name="Kan B."/>
            <person name="Ding K."/>
            <person name="Chen S."/>
            <person name="Cheng H."/>
            <person name="Yao Z."/>
            <person name="He B."/>
            <person name="Chen R."/>
            <person name="Ma D."/>
            <person name="Qiang B."/>
            <person name="Wen Y."/>
            <person name="Hou Y."/>
            <person name="Yu J."/>
        </authorList>
    </citation>
    <scope>NUCLEOTIDE SEQUENCE [LARGE SCALE GENOMIC DNA]</scope>
    <source>
        <strain>301 / Serotype 2a</strain>
    </source>
</reference>
<reference key="2">
    <citation type="journal article" date="2020" name="EMBO J.">
        <title>A unique bacterial tactic to circumvent the cell death crosstalk induced by blockade of caspase-8.</title>
        <authorList>
            <person name="Ashida H."/>
            <person name="Sasakawa C."/>
            <person name="Suzuki T."/>
        </authorList>
    </citation>
    <scope>FUNCTION</scope>
    <scope>SUBCELLULAR LOCATION</scope>
    <scope>DISRUPTION PHENOTYPE</scope>
    <scope>MUTAGENESIS OF CYS-64; HIS-148 AND ASP-171</scope>
    <source>
        <strain>YSH6000 / Serotype 2a</strain>
    </source>
</reference>
<accession>Q99Q01</accession>
<accession>Q7BCM3</accession>
<comment type="function">
    <text evidence="1">Effector protease that disrupts necroptosis in host cells by mediating proteolytic cleavage of host RIPK1 and RIPK3.</text>
</comment>
<comment type="subcellular location">
    <subcellularLocation>
        <location evidence="4">Secreted</location>
    </subcellularLocation>
    <text evidence="4">Secreted via the type III secretion system (T3SS).</text>
</comment>
<comment type="disruption phenotype">
    <text evidence="1">Host cells display necroptosis.</text>
</comment>
<comment type="similarity">
    <text evidence="3">Belongs to the Toxin_15 family.</text>
</comment>
<feature type="chain" id="PRO_0000455088" description="Effector protease OspD3">
    <location>
        <begin position="1"/>
        <end position="565"/>
    </location>
</feature>
<feature type="mutagenesis site" description="Abolished ability to cleave host RIPK1." evidence="1">
    <original>C</original>
    <variation>A</variation>
    <location>
        <position position="64"/>
    </location>
</feature>
<feature type="mutagenesis site" description="Abolished ability to cleave host RIPK1." evidence="1">
    <original>H</original>
    <variation>A</variation>
    <location>
        <position position="148"/>
    </location>
</feature>
<feature type="mutagenesis site" description="Abolished ability to cleave host RIPK1." evidence="1">
    <original>D</original>
    <variation>A</variation>
    <location>
        <position position="171"/>
    </location>
</feature>
<dbReference type="EC" id="3.4.-.-" evidence="1"/>
<dbReference type="EMBL" id="AF386526">
    <property type="protein sequence ID" value="AAL72316.1"/>
    <property type="molecule type" value="Genomic_DNA"/>
</dbReference>
<dbReference type="RefSeq" id="NP_858226.1">
    <property type="nucleotide sequence ID" value="NC_004851.1"/>
</dbReference>
<dbReference type="RefSeq" id="WP_010921642.1">
    <property type="nucleotide sequence ID" value="NZ_UIPM01000163.1"/>
</dbReference>
<dbReference type="SMR" id="Q99Q01"/>
<dbReference type="PaxDb" id="198214-CP0093"/>
<dbReference type="GeneID" id="1238012"/>
<dbReference type="KEGG" id="sfl:CP0093"/>
<dbReference type="PATRIC" id="fig|198214.7.peg.5346"/>
<dbReference type="HOGENOM" id="CLU_495867_0_0_6"/>
<dbReference type="Proteomes" id="UP000001006">
    <property type="component" value="Plasmid pCP301"/>
</dbReference>
<dbReference type="GO" id="GO:0005576">
    <property type="term" value="C:extracellular region"/>
    <property type="evidence" value="ECO:0007669"/>
    <property type="project" value="UniProtKB-SubCell"/>
</dbReference>
<dbReference type="GO" id="GO:0008233">
    <property type="term" value="F:peptidase activity"/>
    <property type="evidence" value="ECO:0000314"/>
    <property type="project" value="UniProtKB"/>
</dbReference>
<dbReference type="GO" id="GO:0090729">
    <property type="term" value="F:toxin activity"/>
    <property type="evidence" value="ECO:0007669"/>
    <property type="project" value="UniProtKB-KW"/>
</dbReference>
<dbReference type="GO" id="GO:0006508">
    <property type="term" value="P:proteolysis"/>
    <property type="evidence" value="ECO:0007669"/>
    <property type="project" value="UniProtKB-KW"/>
</dbReference>
<dbReference type="Gene3D" id="1.25.40.20">
    <property type="entry name" value="Ankyrin repeat-containing domain"/>
    <property type="match status" value="1"/>
</dbReference>
<dbReference type="InterPro" id="IPR036770">
    <property type="entry name" value="Ankyrin_rpt-contain_sf"/>
</dbReference>
<dbReference type="InterPro" id="IPR012927">
    <property type="entry name" value="Toxin_15_N"/>
</dbReference>
<dbReference type="Pfam" id="PF07906">
    <property type="entry name" value="Toxin_15"/>
    <property type="match status" value="1"/>
</dbReference>